<dbReference type="EC" id="3.6.1.15" evidence="5"/>
<dbReference type="EC" id="3.4.22.66"/>
<dbReference type="EC" id="2.7.7.48"/>
<dbReference type="EMBL" id="Z69620">
    <property type="protein sequence ID" value="CAA93445.1"/>
    <property type="molecule type" value="Genomic_RNA"/>
</dbReference>
<dbReference type="EMBL" id="Z32526">
    <property type="status" value="NOT_ANNOTATED_CDS"/>
    <property type="molecule type" value="Genomic_RNA"/>
</dbReference>
<dbReference type="RefSeq" id="NP_068828.1">
    <property type="nucleotide sequence ID" value="NC_002615.1"/>
</dbReference>
<dbReference type="SMR" id="Q96725"/>
<dbReference type="MEROPS" id="C24.001"/>
<dbReference type="GeneID" id="912265"/>
<dbReference type="KEGG" id="vg:912265"/>
<dbReference type="Proteomes" id="UP000132282">
    <property type="component" value="Segment"/>
</dbReference>
<dbReference type="GO" id="GO:0030430">
    <property type="term" value="C:host cell cytoplasm"/>
    <property type="evidence" value="ECO:0007669"/>
    <property type="project" value="UniProtKB-SubCell"/>
</dbReference>
<dbReference type="GO" id="GO:0019028">
    <property type="term" value="C:viral capsid"/>
    <property type="evidence" value="ECO:0007669"/>
    <property type="project" value="UniProtKB-KW"/>
</dbReference>
<dbReference type="GO" id="GO:0005524">
    <property type="term" value="F:ATP binding"/>
    <property type="evidence" value="ECO:0007669"/>
    <property type="project" value="UniProtKB-KW"/>
</dbReference>
<dbReference type="GO" id="GO:0004197">
    <property type="term" value="F:cysteine-type endopeptidase activity"/>
    <property type="evidence" value="ECO:0007669"/>
    <property type="project" value="InterPro"/>
</dbReference>
<dbReference type="GO" id="GO:0017111">
    <property type="term" value="F:ribonucleoside triphosphate phosphatase activity"/>
    <property type="evidence" value="ECO:0007669"/>
    <property type="project" value="UniProtKB-EC"/>
</dbReference>
<dbReference type="GO" id="GO:0003723">
    <property type="term" value="F:RNA binding"/>
    <property type="evidence" value="ECO:0007669"/>
    <property type="project" value="InterPro"/>
</dbReference>
<dbReference type="GO" id="GO:0003724">
    <property type="term" value="F:RNA helicase activity"/>
    <property type="evidence" value="ECO:0007669"/>
    <property type="project" value="InterPro"/>
</dbReference>
<dbReference type="GO" id="GO:0003968">
    <property type="term" value="F:RNA-directed RNA polymerase activity"/>
    <property type="evidence" value="ECO:0007669"/>
    <property type="project" value="UniProtKB-KW"/>
</dbReference>
<dbReference type="GO" id="GO:0006351">
    <property type="term" value="P:DNA-templated transcription"/>
    <property type="evidence" value="ECO:0007669"/>
    <property type="project" value="InterPro"/>
</dbReference>
<dbReference type="GO" id="GO:0006508">
    <property type="term" value="P:proteolysis"/>
    <property type="evidence" value="ECO:0007669"/>
    <property type="project" value="UniProtKB-KW"/>
</dbReference>
<dbReference type="GO" id="GO:0039694">
    <property type="term" value="P:viral RNA genome replication"/>
    <property type="evidence" value="ECO:0007669"/>
    <property type="project" value="InterPro"/>
</dbReference>
<dbReference type="CDD" id="cd00009">
    <property type="entry name" value="AAA"/>
    <property type="match status" value="1"/>
</dbReference>
<dbReference type="CDD" id="cd23192">
    <property type="entry name" value="Caliciviridae_RdRp"/>
    <property type="match status" value="1"/>
</dbReference>
<dbReference type="CDD" id="cd00205">
    <property type="entry name" value="rhv_like"/>
    <property type="match status" value="1"/>
</dbReference>
<dbReference type="Gene3D" id="1.10.260.110">
    <property type="match status" value="1"/>
</dbReference>
<dbReference type="Gene3D" id="1.20.960.20">
    <property type="match status" value="1"/>
</dbReference>
<dbReference type="Gene3D" id="2.60.120.20">
    <property type="match status" value="1"/>
</dbReference>
<dbReference type="Gene3D" id="3.30.70.270">
    <property type="match status" value="1"/>
</dbReference>
<dbReference type="Gene3D" id="6.10.140.320">
    <property type="match status" value="1"/>
</dbReference>
<dbReference type="Gene3D" id="4.10.8.20">
    <property type="entry name" value="DNA/RNA polymerases"/>
    <property type="match status" value="1"/>
</dbReference>
<dbReference type="Gene3D" id="3.40.50.300">
    <property type="entry name" value="P-loop containing nucleotide triphosphate hydrolases"/>
    <property type="match status" value="1"/>
</dbReference>
<dbReference type="InterPro" id="IPR004005">
    <property type="entry name" value="Calicivirus_coat"/>
</dbReference>
<dbReference type="InterPro" id="IPR043502">
    <property type="entry name" value="DNA/RNA_pol_sf"/>
</dbReference>
<dbReference type="InterPro" id="IPR004004">
    <property type="entry name" value="Helic/Pol/Pept_Calicivir-typ"/>
</dbReference>
<dbReference type="InterPro" id="IPR000605">
    <property type="entry name" value="Helicase_SF3_ssDNA/RNA_vir"/>
</dbReference>
<dbReference type="InterPro" id="IPR014759">
    <property type="entry name" value="Helicase_SF3_ssRNA_vir"/>
</dbReference>
<dbReference type="InterPro" id="IPR027417">
    <property type="entry name" value="P-loop_NTPase"/>
</dbReference>
<dbReference type="InterPro" id="IPR000317">
    <property type="entry name" value="Peptidase_C24"/>
</dbReference>
<dbReference type="InterPro" id="IPR009003">
    <property type="entry name" value="Peptidase_S1_PA"/>
</dbReference>
<dbReference type="InterPro" id="IPR043128">
    <property type="entry name" value="Rev_trsase/Diguanyl_cyclase"/>
</dbReference>
<dbReference type="InterPro" id="IPR033703">
    <property type="entry name" value="Rhv-like"/>
</dbReference>
<dbReference type="InterPro" id="IPR001205">
    <property type="entry name" value="RNA-dir_pol_C"/>
</dbReference>
<dbReference type="InterPro" id="IPR007094">
    <property type="entry name" value="RNA-dir_pol_PSvirus"/>
</dbReference>
<dbReference type="InterPro" id="IPR029053">
    <property type="entry name" value="Viral_coat"/>
</dbReference>
<dbReference type="InterPro" id="IPR049434">
    <property type="entry name" value="VPg"/>
</dbReference>
<dbReference type="Pfam" id="PF00915">
    <property type="entry name" value="Calici_coat"/>
    <property type="match status" value="1"/>
</dbReference>
<dbReference type="Pfam" id="PF03510">
    <property type="entry name" value="Peptidase_C24"/>
    <property type="match status" value="1"/>
</dbReference>
<dbReference type="Pfam" id="PF00680">
    <property type="entry name" value="RdRP_1"/>
    <property type="match status" value="1"/>
</dbReference>
<dbReference type="Pfam" id="PF00910">
    <property type="entry name" value="RNA_helicase"/>
    <property type="match status" value="1"/>
</dbReference>
<dbReference type="Pfam" id="PF20915">
    <property type="entry name" value="VPg"/>
    <property type="match status" value="1"/>
</dbReference>
<dbReference type="PRINTS" id="PR00916">
    <property type="entry name" value="2CENDOPTASE"/>
</dbReference>
<dbReference type="PRINTS" id="PR00918">
    <property type="entry name" value="CALICVIRUSNS"/>
</dbReference>
<dbReference type="SUPFAM" id="SSF56672">
    <property type="entry name" value="DNA/RNA polymerases"/>
    <property type="match status" value="1"/>
</dbReference>
<dbReference type="SUPFAM" id="SSF52540">
    <property type="entry name" value="P-loop containing nucleoside triphosphate hydrolases"/>
    <property type="match status" value="1"/>
</dbReference>
<dbReference type="SUPFAM" id="SSF88633">
    <property type="entry name" value="Positive stranded ssRNA viruses"/>
    <property type="match status" value="1"/>
</dbReference>
<dbReference type="SUPFAM" id="SSF50494">
    <property type="entry name" value="Trypsin-like serine proteases"/>
    <property type="match status" value="1"/>
</dbReference>
<dbReference type="PROSITE" id="PS51894">
    <property type="entry name" value="CV_3CL_PRO"/>
    <property type="match status" value="1"/>
</dbReference>
<dbReference type="PROSITE" id="PS50507">
    <property type="entry name" value="RDRP_SSRNA_POS"/>
    <property type="match status" value="1"/>
</dbReference>
<dbReference type="PROSITE" id="PS51218">
    <property type="entry name" value="SF3_HELICASE_2"/>
    <property type="match status" value="1"/>
</dbReference>
<name>POLG_EBHSG</name>
<protein>
    <recommendedName>
        <fullName>Genome polyprotein</fullName>
    </recommendedName>
    <alternativeName>
        <fullName>p254</fullName>
    </alternativeName>
    <component>
        <recommendedName>
            <fullName>NS1</fullName>
        </recommendedName>
        <alternativeName>
            <fullName>Protein p16</fullName>
        </alternativeName>
    </component>
    <component>
        <recommendedName>
            <fullName>NS2</fullName>
        </recommendedName>
        <alternativeName>
            <fullName>Protein p23</fullName>
        </alternativeName>
    </component>
    <component>
        <recommendedName>
            <fullName>NTPase</fullName>
            <ecNumber evidence="5">3.6.1.15</ecNumber>
        </recommendedName>
        <alternativeName>
            <fullName>2C-like protein</fullName>
        </alternativeName>
        <alternativeName>
            <fullName>NS3</fullName>
        </alternativeName>
        <alternativeName>
            <fullName>P2C</fullName>
        </alternativeName>
        <alternativeName>
            <fullName>p37</fullName>
        </alternativeName>
    </component>
    <component>
        <recommendedName>
            <fullName>Precursor p41</fullName>
        </recommendedName>
    </component>
    <component>
        <recommendedName>
            <fullName>NS4</fullName>
        </recommendedName>
        <alternativeName>
            <fullName>Protein p29</fullName>
        </alternativeName>
    </component>
    <component>
        <recommendedName>
            <fullName>Protein p23/2</fullName>
        </recommendedName>
    </component>
    <component>
        <recommendedName>
            <fullName>Protein p18</fullName>
        </recommendedName>
    </component>
    <component>
        <recommendedName>
            <fullName>Viral genome-linked protein</fullName>
        </recommendedName>
        <alternativeName>
            <fullName>NS5</fullName>
        </alternativeName>
        <alternativeName>
            <fullName>VPg</fullName>
        </alternativeName>
        <alternativeName>
            <fullName>p13</fullName>
        </alternativeName>
    </component>
    <component>
        <recommendedName>
            <fullName>3C-like protease</fullName>
            <shortName>3CLpro</shortName>
            <ecNumber>3.4.22.66</ecNumber>
        </recommendedName>
        <alternativeName>
            <fullName>Calicivirin</fullName>
        </alternativeName>
        <alternativeName>
            <fullName>NS6</fullName>
        </alternativeName>
        <alternativeName>
            <fullName>Thiol protease P3C</fullName>
        </alternativeName>
        <alternativeName>
            <fullName>p15</fullName>
        </alternativeName>
    </component>
    <component>
        <recommendedName>
            <fullName>RNA-directed RNA polymerase</fullName>
            <ecNumber>2.7.7.48</ecNumber>
        </recommendedName>
        <alternativeName>
            <fullName>3Dpol</fullName>
        </alternativeName>
        <alternativeName>
            <fullName>NS7</fullName>
        </alternativeName>
        <alternativeName>
            <fullName>p58</fullName>
        </alternativeName>
    </component>
    <component>
        <recommendedName>
            <fullName>Capsid protein VP60</fullName>
        </recommendedName>
    </component>
</protein>
<keyword id="KW-0877">Alternative promoter usage</keyword>
<keyword id="KW-0067">ATP-binding</keyword>
<keyword id="KW-0167">Capsid protein</keyword>
<keyword id="KW-0191">Covalent protein-RNA linkage</keyword>
<keyword id="KW-1015">Disulfide bond</keyword>
<keyword id="KW-0347">Helicase</keyword>
<keyword id="KW-1035">Host cytoplasm</keyword>
<keyword id="KW-0378">Hydrolase</keyword>
<keyword id="KW-0547">Nucleotide-binding</keyword>
<keyword id="KW-0548">Nucleotidyltransferase</keyword>
<keyword id="KW-0597">Phosphoprotein</keyword>
<keyword id="KW-0645">Protease</keyword>
<keyword id="KW-0696">RNA-directed RNA polymerase</keyword>
<keyword id="KW-0788">Thiol protease</keyword>
<keyword id="KW-0808">Transferase</keyword>
<keyword id="KW-0693">Viral RNA replication</keyword>
<keyword id="KW-0946">Virion</keyword>
<comment type="function">
    <molecule>NS2</molecule>
    <text evidence="4 6">Together with NTPase and NS4, initiates the formation of the replication complex (By similarity). Induces the proliferation of the host smooth ER membranes forming long tubular structures (By similarity). These remodeled membranes probably form the viral factories that contain the replication complex (By similarity).</text>
</comment>
<comment type="function">
    <molecule>NTPase</molecule>
    <text evidence="4 5 6">Displays NTPase activity, but no helicase activity (By similarity). Induces the formation of convoluted membranes derived from the host ER (By similarity). These remodeled membranes probably form the viral factories that contain the replication complex (By similarity). Together with NS2 and NS4, initiates the formation of the replication complex (By similarity).</text>
</comment>
<comment type="function">
    <molecule>NS4</molecule>
    <text evidence="4 6">Probable key protein responsible for the formation of membrane alterations by the virus (By similarity). Induces the formation of convoluted membranes derived from the host ER (By similarity). These remodeled membranes probably form the viral factories that contain the replication complex (By similarity). Together with NS2 and NTPase, initiates the formation of the replication complex (By similarity).</text>
</comment>
<comment type="function">
    <molecule>Viral genome-linked protein</molecule>
    <text evidence="2">Viral genome-linked protein is covalently linked to the 5'-end of the positive-strand, negative-strand genomic RNAs and subgenomic RNA. Acts as a genome-linked replication primer. May recruit ribosome to viral RNA thereby promoting viral proteins translation. Interacts with host translation initiation complex to allow the translation of viral proteins.</text>
</comment>
<comment type="function">
    <molecule>3C-like protease</molecule>
    <text evidence="8">Processes the polyprotein. 3CLpro-RdRp is first released by autocleavage, then all other proteins are cleaved. May cleave polyadenylate-binding protein thereby inhibiting cellular translation.</text>
</comment>
<comment type="function">
    <molecule>RNA-directed RNA polymerase</molecule>
    <text evidence="7">Replicates genomic and antigenomic RNA by recognizing replications specific signals. Also transcribes a subgenomic mRNA by initiating RNA synthesis internally on antigenomic RNA. This sgRNA codes for structural proteins. Catalyzes the covalent attachment VPg with viral RNAs (By similarity).</text>
</comment>
<comment type="function">
    <molecule>Capsid protein VP60</molecule>
    <text evidence="1 7">Capsid protein VP60 self assembles to form an icosahedral capsid with a T=3 symmetry, about 35 nm in diameter, and consisting of 180 capsid proteins. A smaller form of capsid with a diameter of 23 nm might be capsid proteins assembled as icosahedron with T=1 symmetry. The capsid encapsulate VP2 proteins and genomic or subgenomic RNA. Attaches virion to target cells by binding histo-blood group antigens, inducing endocytosis of the viral particle (By similarity). Acidification of the endosome induces conformational change of capsid protein thereby injecting virus genomic RNA into host cytoplasm (By similarity).</text>
</comment>
<comment type="catalytic activity">
    <molecule>NTPase</molecule>
    <reaction evidence="5">
        <text>a ribonucleoside 5'-triphosphate + H2O = a ribonucleoside 5'-diphosphate + phosphate + H(+)</text>
        <dbReference type="Rhea" id="RHEA:23680"/>
        <dbReference type="ChEBI" id="CHEBI:15377"/>
        <dbReference type="ChEBI" id="CHEBI:15378"/>
        <dbReference type="ChEBI" id="CHEBI:43474"/>
        <dbReference type="ChEBI" id="CHEBI:57930"/>
        <dbReference type="ChEBI" id="CHEBI:61557"/>
        <dbReference type="EC" id="3.6.1.15"/>
    </reaction>
</comment>
<comment type="catalytic activity">
    <molecule>3C-like protease</molecule>
    <reaction evidence="10">
        <text>Endopeptidase with a preference for cleavage when the P1 position is occupied by Glu-|-Xaa and the P1' position is occupied by Gly-|-Yaa.</text>
        <dbReference type="EC" id="3.4.22.66"/>
    </reaction>
</comment>
<comment type="catalytic activity">
    <molecule>RNA-directed RNA polymerase</molecule>
    <reaction evidence="8">
        <text>RNA(n) + a ribonucleoside 5'-triphosphate = RNA(n+1) + diphosphate</text>
        <dbReference type="Rhea" id="RHEA:21248"/>
        <dbReference type="Rhea" id="RHEA-COMP:14527"/>
        <dbReference type="Rhea" id="RHEA-COMP:17342"/>
        <dbReference type="ChEBI" id="CHEBI:33019"/>
        <dbReference type="ChEBI" id="CHEBI:61557"/>
        <dbReference type="ChEBI" id="CHEBI:140395"/>
        <dbReference type="EC" id="2.7.7.48"/>
    </reaction>
</comment>
<comment type="cofactor">
    <molecule>RNA-directed RNA polymerase</molecule>
    <cofactor evidence="3">
        <name>Mn(2+)</name>
        <dbReference type="ChEBI" id="CHEBI:29035"/>
    </cofactor>
</comment>
<comment type="subcellular location">
    <molecule>Capsid protein VP60</molecule>
    <subcellularLocation>
        <location>Virion</location>
    </subcellularLocation>
    <subcellularLocation>
        <location evidence="12">Host cytoplasm</location>
    </subcellularLocation>
</comment>
<comment type="alternative products">
    <event type="alternative promoter"/>
    <isoform>
        <id>Q96725-1</id>
        <name>Genome polyprotein</name>
        <sequence type="displayed"/>
    </isoform>
    <isoform>
        <id>Q96725-2</id>
        <name>Subgenomic capsid protein VP60</name>
        <name>VP1</name>
        <sequence type="described" ref="VSP_034377"/>
    </isoform>
</comment>
<comment type="PTM">
    <molecule>Genome polyprotein</molecule>
    <text evidence="3">Specific enzymatic cleavages by its own cysteine protease yield mature proteins (By similarity). The protease cleaves itself from the nascent polyprotein autocatalytically. Precursor p41 can be cleaved by viral 3CLpro into protein p19 and VPg, or cleaved by host protease into protein p23/2 and protein p18 (By similarity).</text>
</comment>
<comment type="PTM">
    <molecule>Viral genome-linked protein</molecule>
    <text evidence="6">VPg is uridylylated by the polymerase and is covalently attached to the 5'-end of the polyadenylated genomic and subgenomic RNAs. This uridylylated form acts as a nucleotide-peptide primer for the polymerase.</text>
</comment>
<comment type="miscellaneous">
    <text evidence="1">Two different RNAs lead the expression of the capsid protein. One arises from the cleavage of the polyprotein translated from the genomic RNA and the other from the translation of a subgenomic RNA derived from the (-)RNA template. Capsid protein expressed from the subgenomic mRNA is produced in much larger amounts than the cleaved one (By similarity).</text>
</comment>
<comment type="miscellaneous">
    <molecule>Isoform Genome polyprotein</molecule>
    <text>Produced from the genomic RNA.</text>
</comment>
<comment type="miscellaneous">
    <molecule>Isoform Subgenomic capsid protein VP60</molecule>
    <text evidence="12">Produced from the subgenomic RNA.</text>
</comment>
<organismHost>
    <name type="scientific">Lepus europaeus</name>
    <name type="common">European hare</name>
    <dbReference type="NCBI Taxonomy" id="9983"/>
</organismHost>
<accession>Q96725</accession>
<sequence length="2334" mass="255925">MAVASRPCGVATSVLPAKKPLSFFTDLVGKTPPRCIRAPHTLAWPVFADLDNEEESPEICRKCGKYANGFGVFDLTDLGDVCLCSIRPQRHVGGPCCLCNKQYIRACGRYCARVLKHYKAFNKVIPCLHSRQVKPVFEGEVEDLFVELGAPTRMNFTEAELASQGASIMDRFVDLVEPCLSTEDSNFLDNICSDASIRKRLEDEYDVDMIAAARARKDFAKTLKLALQDRERKPDKWYSKLGCITTKGRQWAKKVVHGAKKLSDPLKTLAAILLVALHNCVAVDTTTMLSHFKPVNLLAILLDWTNDLPGFLTTLIRFMELYGVVQSTVNLVVDAIKSFWDRVMCATERCCDLLKRLFDKFEDSVPTGPTAGCLIFMSFVFSVIVGYLPNNSVISTFMKGAGKLTTFAGVIGAIRTLWITINQHMVAKDITSIQEKVMAVVKMANEAATLNQLEIVSVLCSELESTLTNRCTLPSYNQHMGVLNAAQKVVADIHTLVLGKINMTKQRPQPVAVVFKGAPGIGKTYLVHRLAKDLGCPHPSNINFGLDHFDSYTGEDVAIADEFNTSGDERWVELFIQMVNTNPCPLNCDKVENKNKVFSSKYLLCTTNSSMVLNATHPRATAFYRRVIIVDVRNKAVEGWQSTRHGSKPGKHCYTKDMSHLTFQVYPHNMPAPGFVFVGEKLVKSQVAPRELKYNELLDMIKNEHPDANFEGATKHEFVYPDVQYEQALLMWKQYFLMYGCTARLAKVFVDDIPYNQVHVARKSDPRSPGAVHHECELKYIWRMVPHFALGCVNMTNQLGTDLTQSQLDRITCGVEGITVTTVDNILPFHSQNTLINPSFLKLIWALRRHLRGLRGITQVATFIWKVMCNPVCAYDTLIRTLTGAATFSEDPVTTTIVCPNCTIQIHTCGGLLVRYSGDPAPVASDNVDRGNQGIDCLTNPNLIAGFSWRQIADLFSTVMTSLCNNHLVNLATMAAIGAVATKALQGVKGKTKRGRGARINLGNDEYDEWQQMRREFNNAHDMTAEEFLELRNRAAMGSDDADAIKFRSWWTNRQLRQDEAHVTVVGKGGVRNEVIRTRVRNAPKGPRTLDDGGFYDNDYEGLPGYLRFNGSGWMIHIGNGMYLSNTHTARSSCSEIVTCSPTTDLCLVKAEPIRSVAQIAEGTPVRDWKRASITTYGLKKTFSDSTKIDVLAYDGPTQTTHGDCGLPLFDEAGKVVAIHTGKLLGFSKMCTLIDCTITKGVYENTDLFCGDPIDYRGLVAFRVAGVEPRPPVSGTRYAKVPGVPEEYHTGYRPANLGRGDPDSHCTLMNIAVKNLQVYQQEPKLTKVDTFIERAAADVLGFLRFLTKGERQMNLNFSAAFNVLDLSTSCGPFVPGKKIDHVKDGKLDEVLSKHLYKCWSVANSGKALHHVYACGLKDELRPLDKVKEGKKRLLWGCNVGVALCAAAVFHNLCFKLKTVARFGPIAVGIDMTSRDVDVMITQLTSKAGDFLCLDYSKWDSTMSPCVVRLAIDILADCCEQTELTKSVVLTLKSLPMTVLDAMIVPTKRGLPSGMPFTSVINSICHWLLWSAAVYKACDEIGLFCSNLYEDAPFFVYGDDGVYAMTPMMVSLLPAILDNLRDYGLSPTAADKTEFIDVCPLKDISFLKRKFVMSELGWLSQLDRSSILRQLEWTKTAKRHMCIEECSELDKDERGVQLEELQIHAAAHGEEFFELVKKELRRQQAFTRFSVFDYQTARKTLGDRKRIVSVVPDDSFVNVMEGKPRADAPGTATTASVPGTTTDGMDPGVVASTDVVTADNVAASVATAGIGGPPQQASPQESWRVNFFYNDVFTWSVTDAPGSILYTVQHSPQNNPFTQVLSQMYAGWAGGMQFRFIVAGSGIFGGRLVCAIIPPGIQIQPGLEVRQFPHVVIDARSLEPVTITMPDLRPEMYHPTGNPGLVPTLVVSVYNNLINPFGGTTSAIQVTVETRPSEDFEFVLIRAPSSKTVDSVNPSWLLTTPVLTGAGSDNRWGAPIVGLQPVPGGFSTSNRHWNMNGETYGWSSPRFDDIDHPSGNVSYPSGSATNTIETWYANAGTATTNPISNIAPDGFPDMGAIPFSGTTIPTGAWVGFGQVWNASNGTPYVGTVQAYELGFANGAPSSIRPVTTTTGAQLVAKSIYGVAIAQNQTSAGIIFLSKGMVSTPGVAATTYTPQPSAIVTTPGTPVAAPIGKNTPIMFSAVVRRTGDVNAGPGSANGTQYGVGSQPLSVTLGLSLTNYSSALQPGQFFVWQLNFASGFMEVGMNTDGYFYAGTGAYSGMIDLTDLIDVRPVGVRPNTSTLVFNLAGVATTGYSYV</sequence>
<proteinExistence type="inferred from homology"/>
<gene>
    <name type="ORF">ORF1</name>
</gene>
<organism>
    <name type="scientific">European brown hare syndrome virus (strain GD)</name>
    <name type="common">Ha/LV/EBHSV/GD/1989/FR</name>
    <name type="synonym">EBHSV-GD</name>
    <dbReference type="NCBI Taxonomy" id="316979"/>
    <lineage>
        <taxon>Viruses</taxon>
        <taxon>Riboviria</taxon>
        <taxon>Orthornavirae</taxon>
        <taxon>Pisuviricota</taxon>
        <taxon>Pisoniviricetes</taxon>
        <taxon>Picornavirales</taxon>
        <taxon>Caliciviridae</taxon>
        <taxon>Lagovirus</taxon>
        <taxon>European brown hare syndrome virus</taxon>
    </lineage>
</organism>
<feature type="chain" id="PRO_0000341986" description="Genome polyprotein">
    <location>
        <begin position="1"/>
        <end position="2334"/>
    </location>
</feature>
<feature type="chain" id="PRO_0000036986" description="NS1" evidence="1">
    <location>
        <begin position="1"/>
        <end position="138"/>
    </location>
</feature>
<feature type="chain" id="PRO_0000036987" description="NS2" evidence="1">
    <location>
        <begin position="139"/>
        <end position="334"/>
    </location>
</feature>
<feature type="chain" id="PRO_0000036988" description="NTPase" evidence="1">
    <location>
        <begin position="335"/>
        <end position="711"/>
    </location>
</feature>
<feature type="chain" id="PRO_0000341987" description="Precursor p41">
    <location>
        <begin position="712"/>
        <end position="1108"/>
    </location>
</feature>
<feature type="chain" id="PRO_0000036989" description="NS4" evidence="1">
    <location>
        <begin position="712"/>
        <end position="986"/>
    </location>
</feature>
<feature type="chain" id="PRO_0000341988" description="Protein p23/2">
    <location>
        <begin position="712"/>
        <end position="929"/>
    </location>
</feature>
<feature type="chain" id="PRO_0000341989" description="Protein p18">
    <location>
        <begin position="930"/>
        <end position="1101"/>
    </location>
</feature>
<feature type="chain" id="PRO_0000036990" description="Viral genome-linked protein" evidence="1">
    <location>
        <begin position="987"/>
        <end position="1101"/>
    </location>
</feature>
<feature type="chain" id="PRO_0000036991" description="3C-like protease" evidence="1">
    <location>
        <begin position="1102"/>
        <end position="1244"/>
    </location>
</feature>
<feature type="chain" id="PRO_0000036992" description="RNA-directed RNA polymerase" evidence="1">
    <location>
        <begin position="1245"/>
        <end position="1760"/>
    </location>
</feature>
<feature type="chain" id="PRO_0000036994" description="Capsid protein VP60" evidence="1">
    <location>
        <begin position="1761"/>
        <end position="2334"/>
    </location>
</feature>
<feature type="domain" description="SF3 helicase" evidence="9">
    <location>
        <begin position="487"/>
        <end position="647"/>
    </location>
</feature>
<feature type="domain" description="Peptidase C24" evidence="10">
    <location>
        <begin position="1102"/>
        <end position="1237"/>
    </location>
</feature>
<feature type="domain" description="RdRp catalytic" evidence="8">
    <location>
        <begin position="1488"/>
        <end position="1612"/>
    </location>
</feature>
<feature type="region of interest" description="Disordered" evidence="11">
    <location>
        <begin position="1760"/>
        <end position="1784"/>
    </location>
</feature>
<feature type="compositionally biased region" description="Low complexity" evidence="11">
    <location>
        <begin position="1767"/>
        <end position="1781"/>
    </location>
</feature>
<feature type="active site" description="For 3CLpro activity" evidence="10">
    <location>
        <position position="1128"/>
    </location>
</feature>
<feature type="active site" description="For 3CLpro activity" evidence="10">
    <location>
        <position position="1145"/>
    </location>
</feature>
<feature type="active site" description="For 3CLpro activity" evidence="10">
    <location>
        <position position="1205"/>
    </location>
</feature>
<feature type="site" description="Cleavage; by 3CLpro" evidence="3">
    <location>
        <begin position="138"/>
        <end position="139"/>
    </location>
</feature>
<feature type="site" description="Cleavage; by Pro-Pol" evidence="3">
    <location>
        <begin position="334"/>
        <end position="335"/>
    </location>
</feature>
<feature type="site" description="Cleavage; by 3CLpro" evidence="3">
    <location>
        <begin position="711"/>
        <end position="712"/>
    </location>
</feature>
<feature type="site" description="Cleavage; by host" evidence="3">
    <location>
        <begin position="929"/>
        <end position="930"/>
    </location>
</feature>
<feature type="site" description="Cleavage; by Pro-Pol" evidence="3">
    <location>
        <begin position="986"/>
        <end position="987"/>
    </location>
</feature>
<feature type="site" description="Cleavage; by 3CLpro" evidence="3">
    <location>
        <begin position="1101"/>
        <end position="1102"/>
    </location>
</feature>
<feature type="site" description="Cleavage; by Pro-Pol" evidence="3">
    <location>
        <begin position="1244"/>
        <end position="1245"/>
    </location>
</feature>
<feature type="site" description="Cleavage; by 3CLpro" evidence="3">
    <location>
        <begin position="1760"/>
        <end position="1761"/>
    </location>
</feature>
<feature type="modified residue" description="O-(5'-phospho-RNA)-tyrosine" evidence="3">
    <location>
        <position position="1007"/>
    </location>
</feature>
<feature type="disulfide bond" evidence="1">
    <location>
        <begin position="1577"/>
        <end position="1584"/>
    </location>
</feature>
<feature type="splice variant" id="VSP_034377" description="In isoform Subgenomic capsid protein VP60." evidence="12">
    <location>
        <begin position="1"/>
        <end position="1758"/>
    </location>
</feature>
<reference key="1">
    <citation type="journal article" date="1996" name="J. Gen. Virol.">
        <title>European brown hare syndrome virus: molecular cloning and sequencing of the genome.</title>
        <authorList>
            <person name="Le Gall G."/>
            <person name="Huguet S."/>
            <person name="Vende P."/>
            <person name="Vautherot J.-F."/>
            <person name="Rasschaert D."/>
        </authorList>
    </citation>
    <scope>NUCLEOTIDE SEQUENCE [GENOMIC RNA]</scope>
</reference>
<evidence type="ECO:0000250" key="1"/>
<evidence type="ECO:0000250" key="2">
    <source>
        <dbReference type="UniProtKB" id="P27409"/>
    </source>
</evidence>
<evidence type="ECO:0000250" key="3">
    <source>
        <dbReference type="UniProtKB" id="P27410"/>
    </source>
</evidence>
<evidence type="ECO:0000250" key="4">
    <source>
        <dbReference type="UniProtKB" id="P54634"/>
    </source>
</evidence>
<evidence type="ECO:0000250" key="5">
    <source>
        <dbReference type="UniProtKB" id="Q04544"/>
    </source>
</evidence>
<evidence type="ECO:0000250" key="6">
    <source>
        <dbReference type="UniProtKB" id="Q66914"/>
    </source>
</evidence>
<evidence type="ECO:0000250" key="7">
    <source>
        <dbReference type="UniProtKB" id="Q86119"/>
    </source>
</evidence>
<evidence type="ECO:0000255" key="8">
    <source>
        <dbReference type="PROSITE-ProRule" id="PRU00539"/>
    </source>
</evidence>
<evidence type="ECO:0000255" key="9">
    <source>
        <dbReference type="PROSITE-ProRule" id="PRU00551"/>
    </source>
</evidence>
<evidence type="ECO:0000255" key="10">
    <source>
        <dbReference type="PROSITE-ProRule" id="PRU01242"/>
    </source>
</evidence>
<evidence type="ECO:0000256" key="11">
    <source>
        <dbReference type="SAM" id="MobiDB-lite"/>
    </source>
</evidence>
<evidence type="ECO:0000305" key="12"/>